<keyword id="KW-0963">Cytoplasm</keyword>
<keyword id="KW-0255">Endonuclease</keyword>
<keyword id="KW-0378">Hydrolase</keyword>
<keyword id="KW-0464">Manganese</keyword>
<keyword id="KW-0479">Metal-binding</keyword>
<keyword id="KW-0540">Nuclease</keyword>
<keyword id="KW-1185">Reference proteome</keyword>
<reference key="1">
    <citation type="journal article" date="2005" name="Science">
        <title>Genome streamlining in a cosmopolitan oceanic bacterium.</title>
        <authorList>
            <person name="Giovannoni S.J."/>
            <person name="Tripp H.J."/>
            <person name="Givan S."/>
            <person name="Podar M."/>
            <person name="Vergin K.L."/>
            <person name="Baptista D."/>
            <person name="Bibbs L."/>
            <person name="Eads J."/>
            <person name="Richardson T.H."/>
            <person name="Noordewier M."/>
            <person name="Rappe M.S."/>
            <person name="Short J.M."/>
            <person name="Carrington J.C."/>
            <person name="Mathur E.J."/>
        </authorList>
    </citation>
    <scope>NUCLEOTIDE SEQUENCE [LARGE SCALE GENOMIC DNA]</scope>
    <source>
        <strain>HTCC1062</strain>
    </source>
</reference>
<gene>
    <name evidence="1" type="primary">rnhB</name>
    <name type="ordered locus">SAR11_0108</name>
</gene>
<comment type="function">
    <text evidence="1">Endonuclease that specifically degrades the RNA of RNA-DNA hybrids.</text>
</comment>
<comment type="catalytic activity">
    <reaction evidence="1">
        <text>Endonucleolytic cleavage to 5'-phosphomonoester.</text>
        <dbReference type="EC" id="3.1.26.4"/>
    </reaction>
</comment>
<comment type="cofactor">
    <cofactor evidence="1">
        <name>Mn(2+)</name>
        <dbReference type="ChEBI" id="CHEBI:29035"/>
    </cofactor>
    <cofactor evidence="1">
        <name>Mg(2+)</name>
        <dbReference type="ChEBI" id="CHEBI:18420"/>
    </cofactor>
    <text evidence="1">Manganese or magnesium. Binds 1 divalent metal ion per monomer in the absence of substrate. May bind a second metal ion after substrate binding.</text>
</comment>
<comment type="subcellular location">
    <subcellularLocation>
        <location evidence="1">Cytoplasm</location>
    </subcellularLocation>
</comment>
<comment type="similarity">
    <text evidence="1">Belongs to the RNase HII family.</text>
</comment>
<proteinExistence type="inferred from homology"/>
<evidence type="ECO:0000255" key="1">
    <source>
        <dbReference type="HAMAP-Rule" id="MF_00052"/>
    </source>
</evidence>
<evidence type="ECO:0000255" key="2">
    <source>
        <dbReference type="PROSITE-ProRule" id="PRU01319"/>
    </source>
</evidence>
<name>RNH2_PELUB</name>
<feature type="chain" id="PRO_0000235746" description="Ribonuclease HII">
    <location>
        <begin position="1"/>
        <end position="186"/>
    </location>
</feature>
<feature type="domain" description="RNase H type-2" evidence="2">
    <location>
        <begin position="2"/>
        <end position="186"/>
    </location>
</feature>
<feature type="binding site" evidence="1">
    <location>
        <position position="8"/>
    </location>
    <ligand>
        <name>a divalent metal cation</name>
        <dbReference type="ChEBI" id="CHEBI:60240"/>
    </ligand>
</feature>
<feature type="binding site" evidence="1">
    <location>
        <position position="9"/>
    </location>
    <ligand>
        <name>a divalent metal cation</name>
        <dbReference type="ChEBI" id="CHEBI:60240"/>
    </ligand>
</feature>
<feature type="binding site" evidence="1">
    <location>
        <position position="99"/>
    </location>
    <ligand>
        <name>a divalent metal cation</name>
        <dbReference type="ChEBI" id="CHEBI:60240"/>
    </ligand>
</feature>
<dbReference type="EC" id="3.1.26.4" evidence="1"/>
<dbReference type="EMBL" id="CP000084">
    <property type="protein sequence ID" value="AAZ20932.1"/>
    <property type="molecule type" value="Genomic_DNA"/>
</dbReference>
<dbReference type="RefSeq" id="WP_011281476.1">
    <property type="nucleotide sequence ID" value="NC_007205.1"/>
</dbReference>
<dbReference type="SMR" id="Q4FPF7"/>
<dbReference type="STRING" id="335992.SAR11_0108"/>
<dbReference type="GeneID" id="66294611"/>
<dbReference type="KEGG" id="pub:SAR11_0108"/>
<dbReference type="eggNOG" id="COG0164">
    <property type="taxonomic scope" value="Bacteria"/>
</dbReference>
<dbReference type="HOGENOM" id="CLU_036532_3_2_5"/>
<dbReference type="OrthoDB" id="9803420at2"/>
<dbReference type="Proteomes" id="UP000002528">
    <property type="component" value="Chromosome"/>
</dbReference>
<dbReference type="GO" id="GO:0005737">
    <property type="term" value="C:cytoplasm"/>
    <property type="evidence" value="ECO:0007669"/>
    <property type="project" value="UniProtKB-SubCell"/>
</dbReference>
<dbReference type="GO" id="GO:0032299">
    <property type="term" value="C:ribonuclease H2 complex"/>
    <property type="evidence" value="ECO:0007669"/>
    <property type="project" value="TreeGrafter"/>
</dbReference>
<dbReference type="GO" id="GO:0030145">
    <property type="term" value="F:manganese ion binding"/>
    <property type="evidence" value="ECO:0007669"/>
    <property type="project" value="UniProtKB-UniRule"/>
</dbReference>
<dbReference type="GO" id="GO:0003723">
    <property type="term" value="F:RNA binding"/>
    <property type="evidence" value="ECO:0007669"/>
    <property type="project" value="InterPro"/>
</dbReference>
<dbReference type="GO" id="GO:0004523">
    <property type="term" value="F:RNA-DNA hybrid ribonuclease activity"/>
    <property type="evidence" value="ECO:0007669"/>
    <property type="project" value="UniProtKB-UniRule"/>
</dbReference>
<dbReference type="GO" id="GO:0043137">
    <property type="term" value="P:DNA replication, removal of RNA primer"/>
    <property type="evidence" value="ECO:0007669"/>
    <property type="project" value="TreeGrafter"/>
</dbReference>
<dbReference type="GO" id="GO:0006298">
    <property type="term" value="P:mismatch repair"/>
    <property type="evidence" value="ECO:0007669"/>
    <property type="project" value="TreeGrafter"/>
</dbReference>
<dbReference type="CDD" id="cd07182">
    <property type="entry name" value="RNase_HII_bacteria_HII_like"/>
    <property type="match status" value="1"/>
</dbReference>
<dbReference type="Gene3D" id="3.30.420.10">
    <property type="entry name" value="Ribonuclease H-like superfamily/Ribonuclease H"/>
    <property type="match status" value="1"/>
</dbReference>
<dbReference type="HAMAP" id="MF_00052_B">
    <property type="entry name" value="RNase_HII_B"/>
    <property type="match status" value="1"/>
</dbReference>
<dbReference type="InterPro" id="IPR022898">
    <property type="entry name" value="RNase_HII"/>
</dbReference>
<dbReference type="InterPro" id="IPR001352">
    <property type="entry name" value="RNase_HII/HIII"/>
</dbReference>
<dbReference type="InterPro" id="IPR024567">
    <property type="entry name" value="RNase_HII/HIII_dom"/>
</dbReference>
<dbReference type="InterPro" id="IPR012337">
    <property type="entry name" value="RNaseH-like_sf"/>
</dbReference>
<dbReference type="InterPro" id="IPR036397">
    <property type="entry name" value="RNaseH_sf"/>
</dbReference>
<dbReference type="NCBIfam" id="NF000595">
    <property type="entry name" value="PRK00015.1-3"/>
    <property type="match status" value="1"/>
</dbReference>
<dbReference type="PANTHER" id="PTHR10954">
    <property type="entry name" value="RIBONUCLEASE H2 SUBUNIT A"/>
    <property type="match status" value="1"/>
</dbReference>
<dbReference type="PANTHER" id="PTHR10954:SF18">
    <property type="entry name" value="RIBONUCLEASE HII"/>
    <property type="match status" value="1"/>
</dbReference>
<dbReference type="Pfam" id="PF01351">
    <property type="entry name" value="RNase_HII"/>
    <property type="match status" value="1"/>
</dbReference>
<dbReference type="SUPFAM" id="SSF53098">
    <property type="entry name" value="Ribonuclease H-like"/>
    <property type="match status" value="1"/>
</dbReference>
<dbReference type="PROSITE" id="PS51975">
    <property type="entry name" value="RNASE_H_2"/>
    <property type="match status" value="1"/>
</dbReference>
<sequence length="186" mass="20858">MKILAGVDEVGRGSLIGPVYAAAVILNNSIDKKLLKDSKTLTKDKREELEKYIKKNSIWAIGQASTKEIEKINILHASLLAMKRAILKLKIKPSLVLIDGNKLPDLKNYKLEYVIKGDQKIPSISAASIIAKVSRDKFITKLSKEFNNYGWDTNSGYGTKEHLKAIKQFGITKYHRKTFSPISDLL</sequence>
<protein>
    <recommendedName>
        <fullName evidence="1">Ribonuclease HII</fullName>
        <shortName evidence="1">RNase HII</shortName>
        <ecNumber evidence="1">3.1.26.4</ecNumber>
    </recommendedName>
</protein>
<accession>Q4FPF7</accession>
<organism>
    <name type="scientific">Pelagibacter ubique (strain HTCC1062)</name>
    <dbReference type="NCBI Taxonomy" id="335992"/>
    <lineage>
        <taxon>Bacteria</taxon>
        <taxon>Pseudomonadati</taxon>
        <taxon>Pseudomonadota</taxon>
        <taxon>Alphaproteobacteria</taxon>
        <taxon>Candidatus Pelagibacterales</taxon>
        <taxon>Candidatus Pelagibacteraceae</taxon>
        <taxon>Candidatus Pelagibacter</taxon>
    </lineage>
</organism>